<sequence>MSNPRPHLLIIDALNLIRRLHAVQAQQALTPAQALIATRANLINTCRKLLAASEPTHVIAVFDGEVHSWRKEVYPAYKEGRTPMPTELREGLNELQDAFWECGVDALLSQTDEADDLIATLATGIAQHGARATIISTDKGFCQLICPQIQIRDYFNKRWLDAAFVEQQYGVAPAQLVDFWALTGIGGSNIKGVPGIGPKTATQLLQQYGDLASLLAACQQEDAAKALLKLRQHQDEALLAQRLVRLQRDIPLGFNLREIRYPPAPEA</sequence>
<keyword id="KW-0238">DNA-binding</keyword>
<keyword id="KW-0255">Endonuclease</keyword>
<keyword id="KW-0378">Hydrolase</keyword>
<keyword id="KW-0460">Magnesium</keyword>
<keyword id="KW-0479">Metal-binding</keyword>
<keyword id="KW-0540">Nuclease</keyword>
<keyword id="KW-0630">Potassium</keyword>
<keyword id="KW-1185">Reference proteome</keyword>
<evidence type="ECO:0000255" key="1">
    <source>
        <dbReference type="HAMAP-Rule" id="MF_01192"/>
    </source>
</evidence>
<evidence type="ECO:0000305" key="2"/>
<name>XNI_AERHH</name>
<protein>
    <recommendedName>
        <fullName evidence="1">Flap endonuclease Xni</fullName>
        <shortName evidence="1">FEN</shortName>
        <ecNumber evidence="1">3.1.-.-</ecNumber>
    </recommendedName>
</protein>
<reference key="1">
    <citation type="journal article" date="2006" name="J. Bacteriol.">
        <title>Genome sequence of Aeromonas hydrophila ATCC 7966T: jack of all trades.</title>
        <authorList>
            <person name="Seshadri R."/>
            <person name="Joseph S.W."/>
            <person name="Chopra A.K."/>
            <person name="Sha J."/>
            <person name="Shaw J."/>
            <person name="Graf J."/>
            <person name="Haft D.H."/>
            <person name="Wu M."/>
            <person name="Ren Q."/>
            <person name="Rosovitz M.J."/>
            <person name="Madupu R."/>
            <person name="Tallon L."/>
            <person name="Kim M."/>
            <person name="Jin S."/>
            <person name="Vuong H."/>
            <person name="Stine O.C."/>
            <person name="Ali A."/>
            <person name="Horneman A.J."/>
            <person name="Heidelberg J.F."/>
        </authorList>
    </citation>
    <scope>NUCLEOTIDE SEQUENCE [LARGE SCALE GENOMIC DNA]</scope>
    <source>
        <strain>ATCC 7966 / DSM 30187 / BCRC 13018 / CCUG 14551 / JCM 1027 / KCTC 2358 / NCIMB 9240 / NCTC 8049</strain>
    </source>
</reference>
<organism>
    <name type="scientific">Aeromonas hydrophila subsp. hydrophila (strain ATCC 7966 / DSM 30187 / BCRC 13018 / CCUG 14551 / JCM 1027 / KCTC 2358 / NCIMB 9240 / NCTC 8049)</name>
    <dbReference type="NCBI Taxonomy" id="380703"/>
    <lineage>
        <taxon>Bacteria</taxon>
        <taxon>Pseudomonadati</taxon>
        <taxon>Pseudomonadota</taxon>
        <taxon>Gammaproteobacteria</taxon>
        <taxon>Aeromonadales</taxon>
        <taxon>Aeromonadaceae</taxon>
        <taxon>Aeromonas</taxon>
    </lineage>
</organism>
<proteinExistence type="inferred from homology"/>
<accession>A0KHE3</accession>
<gene>
    <name evidence="1" type="primary">xni</name>
    <name evidence="1" type="synonym">ygdG</name>
    <name type="ordered locus">AHA_1153</name>
</gene>
<feature type="chain" id="PRO_0000297856" description="Flap endonuclease Xni">
    <location>
        <begin position="1"/>
        <end position="267"/>
    </location>
</feature>
<feature type="domain" description="5'-3' exonuclease" evidence="1">
    <location>
        <begin position="171"/>
        <end position="261"/>
    </location>
</feature>
<feature type="region of interest" description="Interaction with DNA" evidence="1">
    <location>
        <begin position="195"/>
        <end position="200"/>
    </location>
</feature>
<feature type="binding site" evidence="1">
    <location>
        <position position="115"/>
    </location>
    <ligand>
        <name>Mg(2+)</name>
        <dbReference type="ChEBI" id="CHEBI:18420"/>
    </ligand>
</feature>
<feature type="binding site" evidence="1">
    <location>
        <position position="182"/>
    </location>
    <ligand>
        <name>K(+)</name>
        <dbReference type="ChEBI" id="CHEBI:29103"/>
    </ligand>
</feature>
<feature type="binding site" evidence="1">
    <location>
        <position position="193"/>
    </location>
    <ligand>
        <name>K(+)</name>
        <dbReference type="ChEBI" id="CHEBI:29103"/>
    </ligand>
</feature>
<feature type="binding site" evidence="1">
    <location>
        <position position="196"/>
    </location>
    <ligand>
        <name>K(+)</name>
        <dbReference type="ChEBI" id="CHEBI:29103"/>
    </ligand>
</feature>
<comment type="function">
    <text evidence="1">Has flap endonuclease activity. During DNA replication, flap endonucleases cleave the 5'-overhanging flap structure that is generated by displacement synthesis when DNA polymerase encounters the 5'-end of a downstream Okazaki fragment.</text>
</comment>
<comment type="cofactor">
    <cofactor evidence="1">
        <name>Mg(2+)</name>
        <dbReference type="ChEBI" id="CHEBI:18420"/>
    </cofactor>
    <text evidence="1">Binds 2 Mg(2+) per subunit. Only one magnesium ion has a direct interaction with the protein, the other interactions are indirect.</text>
</comment>
<comment type="cofactor">
    <cofactor evidence="1">
        <name>K(+)</name>
        <dbReference type="ChEBI" id="CHEBI:29103"/>
    </cofactor>
    <text evidence="1">Binds 1 K(+) per subunit. The potassium ion strongly increases the affinity for DNA.</text>
</comment>
<comment type="similarity">
    <text evidence="1">Belongs to the Xni family.</text>
</comment>
<comment type="sequence caution" evidence="2">
    <conflict type="erroneous initiation">
        <sequence resource="EMBL-CDS" id="ABK36701"/>
    </conflict>
    <text>Extended N-terminus.</text>
</comment>
<dbReference type="EC" id="3.1.-.-" evidence="1"/>
<dbReference type="EMBL" id="CP000462">
    <property type="protein sequence ID" value="ABK36701.1"/>
    <property type="status" value="ALT_INIT"/>
    <property type="molecule type" value="Genomic_DNA"/>
</dbReference>
<dbReference type="RefSeq" id="WP_164927567.1">
    <property type="nucleotide sequence ID" value="NC_008570.1"/>
</dbReference>
<dbReference type="RefSeq" id="YP_855694.1">
    <property type="nucleotide sequence ID" value="NC_008570.1"/>
</dbReference>
<dbReference type="SMR" id="A0KHE3"/>
<dbReference type="STRING" id="380703.AHA_1153"/>
<dbReference type="EnsemblBacteria" id="ABK36701">
    <property type="protein sequence ID" value="ABK36701"/>
    <property type="gene ID" value="AHA_1153"/>
</dbReference>
<dbReference type="GeneID" id="4488776"/>
<dbReference type="KEGG" id="aha:AHA_1153"/>
<dbReference type="PATRIC" id="fig|380703.7.peg.1158"/>
<dbReference type="eggNOG" id="COG0258">
    <property type="taxonomic scope" value="Bacteria"/>
</dbReference>
<dbReference type="HOGENOM" id="CLU_004675_1_2_6"/>
<dbReference type="OrthoDB" id="8070997at2"/>
<dbReference type="Proteomes" id="UP000000756">
    <property type="component" value="Chromosome"/>
</dbReference>
<dbReference type="GO" id="GO:0008409">
    <property type="term" value="F:5'-3' exonuclease activity"/>
    <property type="evidence" value="ECO:0007669"/>
    <property type="project" value="InterPro"/>
</dbReference>
<dbReference type="GO" id="GO:0017108">
    <property type="term" value="F:5'-flap endonuclease activity"/>
    <property type="evidence" value="ECO:0007669"/>
    <property type="project" value="UniProtKB-UniRule"/>
</dbReference>
<dbReference type="GO" id="GO:0003677">
    <property type="term" value="F:DNA binding"/>
    <property type="evidence" value="ECO:0007669"/>
    <property type="project" value="UniProtKB-UniRule"/>
</dbReference>
<dbReference type="GO" id="GO:0000287">
    <property type="term" value="F:magnesium ion binding"/>
    <property type="evidence" value="ECO:0007669"/>
    <property type="project" value="UniProtKB-UniRule"/>
</dbReference>
<dbReference type="GO" id="GO:0030955">
    <property type="term" value="F:potassium ion binding"/>
    <property type="evidence" value="ECO:0007669"/>
    <property type="project" value="UniProtKB-UniRule"/>
</dbReference>
<dbReference type="GO" id="GO:0033567">
    <property type="term" value="P:DNA replication, Okazaki fragment processing"/>
    <property type="evidence" value="ECO:0007669"/>
    <property type="project" value="UniProtKB-UniRule"/>
</dbReference>
<dbReference type="CDD" id="cd09898">
    <property type="entry name" value="H3TH_53EXO"/>
    <property type="match status" value="1"/>
</dbReference>
<dbReference type="CDD" id="cd09859">
    <property type="entry name" value="PIN_53EXO"/>
    <property type="match status" value="1"/>
</dbReference>
<dbReference type="FunFam" id="1.10.150.20:FF:000003">
    <property type="entry name" value="DNA polymerase I"/>
    <property type="match status" value="1"/>
</dbReference>
<dbReference type="Gene3D" id="1.10.150.20">
    <property type="entry name" value="5' to 3' exonuclease, C-terminal subdomain"/>
    <property type="match status" value="1"/>
</dbReference>
<dbReference type="Gene3D" id="3.40.50.1010">
    <property type="entry name" value="5'-nuclease"/>
    <property type="match status" value="1"/>
</dbReference>
<dbReference type="HAMAP" id="MF_01192">
    <property type="entry name" value="Xni"/>
    <property type="match status" value="1"/>
</dbReference>
<dbReference type="InterPro" id="IPR020046">
    <property type="entry name" value="5-3_exonucl_a-hlix_arch_N"/>
</dbReference>
<dbReference type="InterPro" id="IPR002421">
    <property type="entry name" value="5-3_exonuclease"/>
</dbReference>
<dbReference type="InterPro" id="IPR036279">
    <property type="entry name" value="5-3_exonuclease_C_sf"/>
</dbReference>
<dbReference type="InterPro" id="IPR020045">
    <property type="entry name" value="DNA_polI_H3TH"/>
</dbReference>
<dbReference type="InterPro" id="IPR038969">
    <property type="entry name" value="FEN"/>
</dbReference>
<dbReference type="InterPro" id="IPR008918">
    <property type="entry name" value="HhH2"/>
</dbReference>
<dbReference type="InterPro" id="IPR029060">
    <property type="entry name" value="PIN-like_dom_sf"/>
</dbReference>
<dbReference type="InterPro" id="IPR022895">
    <property type="entry name" value="Xni"/>
</dbReference>
<dbReference type="NCBIfam" id="NF007017">
    <property type="entry name" value="PRK09482.1"/>
    <property type="match status" value="1"/>
</dbReference>
<dbReference type="PANTHER" id="PTHR42646:SF2">
    <property type="entry name" value="5'-3' EXONUCLEASE FAMILY PROTEIN"/>
    <property type="match status" value="1"/>
</dbReference>
<dbReference type="PANTHER" id="PTHR42646">
    <property type="entry name" value="FLAP ENDONUCLEASE XNI"/>
    <property type="match status" value="1"/>
</dbReference>
<dbReference type="Pfam" id="PF01367">
    <property type="entry name" value="5_3_exonuc"/>
    <property type="match status" value="1"/>
</dbReference>
<dbReference type="Pfam" id="PF02739">
    <property type="entry name" value="5_3_exonuc_N"/>
    <property type="match status" value="1"/>
</dbReference>
<dbReference type="SMART" id="SM00475">
    <property type="entry name" value="53EXOc"/>
    <property type="match status" value="1"/>
</dbReference>
<dbReference type="SMART" id="SM00279">
    <property type="entry name" value="HhH2"/>
    <property type="match status" value="1"/>
</dbReference>
<dbReference type="SUPFAM" id="SSF47807">
    <property type="entry name" value="5' to 3' exonuclease, C-terminal subdomain"/>
    <property type="match status" value="1"/>
</dbReference>
<dbReference type="SUPFAM" id="SSF88723">
    <property type="entry name" value="PIN domain-like"/>
    <property type="match status" value="1"/>
</dbReference>